<organism>
    <name type="scientific">Clostridium perfringens (strain 13 / Type A)</name>
    <dbReference type="NCBI Taxonomy" id="195102"/>
    <lineage>
        <taxon>Bacteria</taxon>
        <taxon>Bacillati</taxon>
        <taxon>Bacillota</taxon>
        <taxon>Clostridia</taxon>
        <taxon>Eubacteriales</taxon>
        <taxon>Clostridiaceae</taxon>
        <taxon>Clostridium</taxon>
    </lineage>
</organism>
<reference key="1">
    <citation type="journal article" date="2002" name="Proc. Natl. Acad. Sci. U.S.A.">
        <title>Complete genome sequence of Clostridium perfringens, an anaerobic flesh-eater.</title>
        <authorList>
            <person name="Shimizu T."/>
            <person name="Ohtani K."/>
            <person name="Hirakawa H."/>
            <person name="Ohshima K."/>
            <person name="Yamashita A."/>
            <person name="Shiba T."/>
            <person name="Ogasawara N."/>
            <person name="Hattori M."/>
            <person name="Kuhara S."/>
            <person name="Hayashi H."/>
        </authorList>
    </citation>
    <scope>NUCLEOTIDE SEQUENCE [LARGE SCALE GENOMIC DNA]</scope>
    <source>
        <strain>13 / Type A</strain>
    </source>
</reference>
<feature type="chain" id="PRO_0000151136" description="Undecaprenyl-diphosphatase">
    <location>
        <begin position="1"/>
        <end position="304"/>
    </location>
</feature>
<feature type="transmembrane region" description="Helical" evidence="1">
    <location>
        <begin position="5"/>
        <end position="25"/>
    </location>
</feature>
<feature type="transmembrane region" description="Helical" evidence="1">
    <location>
        <begin position="47"/>
        <end position="67"/>
    </location>
</feature>
<feature type="transmembrane region" description="Helical" evidence="1">
    <location>
        <begin position="72"/>
        <end position="92"/>
    </location>
</feature>
<feature type="transmembrane region" description="Helical" evidence="1">
    <location>
        <begin position="111"/>
        <end position="131"/>
    </location>
</feature>
<feature type="transmembrane region" description="Helical" evidence="1">
    <location>
        <begin position="137"/>
        <end position="157"/>
    </location>
</feature>
<feature type="transmembrane region" description="Helical" evidence="1">
    <location>
        <begin position="209"/>
        <end position="231"/>
    </location>
</feature>
<feature type="transmembrane region" description="Helical" evidence="1">
    <location>
        <begin position="248"/>
        <end position="268"/>
    </location>
</feature>
<feature type="transmembrane region" description="Helical" evidence="1">
    <location>
        <begin position="283"/>
        <end position="303"/>
    </location>
</feature>
<gene>
    <name evidence="1" type="primary">uppP</name>
    <name type="synonym">bacA</name>
    <name type="synonym">upk</name>
    <name type="ordered locus">CPE1186</name>
</gene>
<sequence length="304" mass="33713">MGIDFLFILKALIIAIVEGLTEFVPVSSTGHMILVGDLIHFNTQSGGFPEMYEVVIQLGAILAVVVLYWRKISSSVVEFLSYIFSFIGLKTSGDKRKYEKRLAESETGFRFGINVIIGTIPAAILGLLFHDEIKEYLFSTKTVAIGFIVGGILLIVIENNFRKRAKRSKIVKDIDKMTYGQSLLVGCFQCLSLWPGMSRSASTIMGGWISGLSTTVATEFTFFLAIPAMVGASGLDLFKFDYSQMNATNWISLILGFIVAFIVSLVVIDKFINYLKKKPMRVFAIYRVFAGIVLAILIFTKVIS</sequence>
<comment type="function">
    <text evidence="1">Catalyzes the dephosphorylation of undecaprenyl diphosphate (UPP). Confers resistance to bacitracin.</text>
</comment>
<comment type="catalytic activity">
    <reaction evidence="1">
        <text>di-trans,octa-cis-undecaprenyl diphosphate + H2O = di-trans,octa-cis-undecaprenyl phosphate + phosphate + H(+)</text>
        <dbReference type="Rhea" id="RHEA:28094"/>
        <dbReference type="ChEBI" id="CHEBI:15377"/>
        <dbReference type="ChEBI" id="CHEBI:15378"/>
        <dbReference type="ChEBI" id="CHEBI:43474"/>
        <dbReference type="ChEBI" id="CHEBI:58405"/>
        <dbReference type="ChEBI" id="CHEBI:60392"/>
        <dbReference type="EC" id="3.6.1.27"/>
    </reaction>
</comment>
<comment type="subcellular location">
    <subcellularLocation>
        <location evidence="1">Cell membrane</location>
        <topology evidence="1">Multi-pass membrane protein</topology>
    </subcellularLocation>
</comment>
<comment type="miscellaneous">
    <text>Bacitracin is thought to be involved in the inhibition of peptidoglycan synthesis by sequestering undecaprenyl diphosphate, thereby reducing the pool of lipid carrier available.</text>
</comment>
<comment type="similarity">
    <text evidence="1">Belongs to the UppP family.</text>
</comment>
<dbReference type="EC" id="3.6.1.27" evidence="1"/>
<dbReference type="EMBL" id="BA000016">
    <property type="protein sequence ID" value="BAB80892.1"/>
    <property type="molecule type" value="Genomic_DNA"/>
</dbReference>
<dbReference type="RefSeq" id="WP_011010311.1">
    <property type="nucleotide sequence ID" value="NC_003366.1"/>
</dbReference>
<dbReference type="SMR" id="Q8XL56"/>
<dbReference type="STRING" id="195102.gene:10490449"/>
<dbReference type="KEGG" id="cpe:CPE1186"/>
<dbReference type="HOGENOM" id="CLU_060296_2_0_9"/>
<dbReference type="Proteomes" id="UP000000818">
    <property type="component" value="Chromosome"/>
</dbReference>
<dbReference type="GO" id="GO:0005886">
    <property type="term" value="C:plasma membrane"/>
    <property type="evidence" value="ECO:0007669"/>
    <property type="project" value="UniProtKB-SubCell"/>
</dbReference>
<dbReference type="GO" id="GO:0050380">
    <property type="term" value="F:undecaprenyl-diphosphatase activity"/>
    <property type="evidence" value="ECO:0007669"/>
    <property type="project" value="UniProtKB-UniRule"/>
</dbReference>
<dbReference type="GO" id="GO:0071555">
    <property type="term" value="P:cell wall organization"/>
    <property type="evidence" value="ECO:0007669"/>
    <property type="project" value="UniProtKB-KW"/>
</dbReference>
<dbReference type="GO" id="GO:0009252">
    <property type="term" value="P:peptidoglycan biosynthetic process"/>
    <property type="evidence" value="ECO:0007669"/>
    <property type="project" value="UniProtKB-KW"/>
</dbReference>
<dbReference type="GO" id="GO:0008360">
    <property type="term" value="P:regulation of cell shape"/>
    <property type="evidence" value="ECO:0007669"/>
    <property type="project" value="UniProtKB-KW"/>
</dbReference>
<dbReference type="GO" id="GO:0046677">
    <property type="term" value="P:response to antibiotic"/>
    <property type="evidence" value="ECO:0007669"/>
    <property type="project" value="UniProtKB-UniRule"/>
</dbReference>
<dbReference type="HAMAP" id="MF_01006">
    <property type="entry name" value="Undec_diphosphatase"/>
    <property type="match status" value="1"/>
</dbReference>
<dbReference type="InterPro" id="IPR003824">
    <property type="entry name" value="UppP"/>
</dbReference>
<dbReference type="NCBIfam" id="NF001390">
    <property type="entry name" value="PRK00281.1-4"/>
    <property type="match status" value="1"/>
</dbReference>
<dbReference type="NCBIfam" id="TIGR00753">
    <property type="entry name" value="undec_PP_bacA"/>
    <property type="match status" value="1"/>
</dbReference>
<dbReference type="PANTHER" id="PTHR30622">
    <property type="entry name" value="UNDECAPRENYL-DIPHOSPHATASE"/>
    <property type="match status" value="1"/>
</dbReference>
<dbReference type="PANTHER" id="PTHR30622:SF3">
    <property type="entry name" value="UNDECAPRENYL-DIPHOSPHATASE"/>
    <property type="match status" value="1"/>
</dbReference>
<dbReference type="Pfam" id="PF02673">
    <property type="entry name" value="BacA"/>
    <property type="match status" value="1"/>
</dbReference>
<protein>
    <recommendedName>
        <fullName evidence="1">Undecaprenyl-diphosphatase</fullName>
        <ecNumber evidence="1">3.6.1.27</ecNumber>
    </recommendedName>
    <alternativeName>
        <fullName evidence="1">Bacitracin resistance protein</fullName>
    </alternativeName>
    <alternativeName>
        <fullName evidence="1">Undecaprenyl pyrophosphate phosphatase</fullName>
    </alternativeName>
</protein>
<proteinExistence type="inferred from homology"/>
<name>UPPP_CLOPE</name>
<accession>Q8XL56</accession>
<keyword id="KW-0046">Antibiotic resistance</keyword>
<keyword id="KW-1003">Cell membrane</keyword>
<keyword id="KW-0133">Cell shape</keyword>
<keyword id="KW-0961">Cell wall biogenesis/degradation</keyword>
<keyword id="KW-0378">Hydrolase</keyword>
<keyword id="KW-0472">Membrane</keyword>
<keyword id="KW-0573">Peptidoglycan synthesis</keyword>
<keyword id="KW-1185">Reference proteome</keyword>
<keyword id="KW-0812">Transmembrane</keyword>
<keyword id="KW-1133">Transmembrane helix</keyword>
<evidence type="ECO:0000255" key="1">
    <source>
        <dbReference type="HAMAP-Rule" id="MF_01006"/>
    </source>
</evidence>